<evidence type="ECO:0000255" key="1">
    <source>
        <dbReference type="HAMAP-Rule" id="MF_00193"/>
    </source>
</evidence>
<dbReference type="EC" id="6.3.1.5" evidence="1"/>
<dbReference type="EMBL" id="CP000001">
    <property type="protein sequence ID" value="AAU18443.1"/>
    <property type="molecule type" value="Genomic_DNA"/>
</dbReference>
<dbReference type="RefSeq" id="WP_000174879.1">
    <property type="nucleotide sequence ID" value="NZ_CP009968.1"/>
</dbReference>
<dbReference type="SMR" id="Q63CG2"/>
<dbReference type="GeneID" id="75085226"/>
<dbReference type="KEGG" id="bcz:BCE33L1810"/>
<dbReference type="PATRIC" id="fig|288681.22.peg.3722"/>
<dbReference type="UniPathway" id="UPA00253">
    <property type="reaction ID" value="UER00333"/>
</dbReference>
<dbReference type="Proteomes" id="UP000002612">
    <property type="component" value="Chromosome"/>
</dbReference>
<dbReference type="GO" id="GO:0005737">
    <property type="term" value="C:cytoplasm"/>
    <property type="evidence" value="ECO:0007669"/>
    <property type="project" value="InterPro"/>
</dbReference>
<dbReference type="GO" id="GO:0005524">
    <property type="term" value="F:ATP binding"/>
    <property type="evidence" value="ECO:0007669"/>
    <property type="project" value="UniProtKB-UniRule"/>
</dbReference>
<dbReference type="GO" id="GO:0004359">
    <property type="term" value="F:glutaminase activity"/>
    <property type="evidence" value="ECO:0007669"/>
    <property type="project" value="InterPro"/>
</dbReference>
<dbReference type="GO" id="GO:0046872">
    <property type="term" value="F:metal ion binding"/>
    <property type="evidence" value="ECO:0007669"/>
    <property type="project" value="UniProtKB-KW"/>
</dbReference>
<dbReference type="GO" id="GO:0003952">
    <property type="term" value="F:NAD+ synthase (glutamine-hydrolyzing) activity"/>
    <property type="evidence" value="ECO:0007669"/>
    <property type="project" value="InterPro"/>
</dbReference>
<dbReference type="GO" id="GO:0008795">
    <property type="term" value="F:NAD+ synthase activity"/>
    <property type="evidence" value="ECO:0007669"/>
    <property type="project" value="UniProtKB-UniRule"/>
</dbReference>
<dbReference type="GO" id="GO:0009435">
    <property type="term" value="P:NAD biosynthetic process"/>
    <property type="evidence" value="ECO:0007669"/>
    <property type="project" value="UniProtKB-UniRule"/>
</dbReference>
<dbReference type="CDD" id="cd00553">
    <property type="entry name" value="NAD_synthase"/>
    <property type="match status" value="1"/>
</dbReference>
<dbReference type="FunFam" id="3.40.50.620:FF:000015">
    <property type="entry name" value="NH(3)-dependent NAD(+) synthetase"/>
    <property type="match status" value="1"/>
</dbReference>
<dbReference type="Gene3D" id="3.40.50.620">
    <property type="entry name" value="HUPs"/>
    <property type="match status" value="1"/>
</dbReference>
<dbReference type="HAMAP" id="MF_00193">
    <property type="entry name" value="NadE_ammonia_dep"/>
    <property type="match status" value="1"/>
</dbReference>
<dbReference type="InterPro" id="IPR022310">
    <property type="entry name" value="NAD/GMP_synthase"/>
</dbReference>
<dbReference type="InterPro" id="IPR003694">
    <property type="entry name" value="NAD_synthase"/>
</dbReference>
<dbReference type="InterPro" id="IPR022926">
    <property type="entry name" value="NH(3)-dep_NAD(+)_synth"/>
</dbReference>
<dbReference type="InterPro" id="IPR014729">
    <property type="entry name" value="Rossmann-like_a/b/a_fold"/>
</dbReference>
<dbReference type="NCBIfam" id="TIGR00552">
    <property type="entry name" value="nadE"/>
    <property type="match status" value="1"/>
</dbReference>
<dbReference type="NCBIfam" id="NF001979">
    <property type="entry name" value="PRK00768.1"/>
    <property type="match status" value="1"/>
</dbReference>
<dbReference type="PANTHER" id="PTHR23090">
    <property type="entry name" value="NH 3 /GLUTAMINE-DEPENDENT NAD + SYNTHETASE"/>
    <property type="match status" value="1"/>
</dbReference>
<dbReference type="PANTHER" id="PTHR23090:SF7">
    <property type="entry name" value="NH(3)-DEPENDENT NAD(+) SYNTHETASE"/>
    <property type="match status" value="1"/>
</dbReference>
<dbReference type="Pfam" id="PF02540">
    <property type="entry name" value="NAD_synthase"/>
    <property type="match status" value="1"/>
</dbReference>
<dbReference type="SUPFAM" id="SSF52402">
    <property type="entry name" value="Adenine nucleotide alpha hydrolases-like"/>
    <property type="match status" value="1"/>
</dbReference>
<feature type="chain" id="PRO_1000077535" description="NH(3)-dependent NAD(+) synthetase">
    <location>
        <begin position="1"/>
        <end position="272"/>
    </location>
</feature>
<feature type="binding site" evidence="1">
    <location>
        <begin position="45"/>
        <end position="52"/>
    </location>
    <ligand>
        <name>ATP</name>
        <dbReference type="ChEBI" id="CHEBI:30616"/>
    </ligand>
</feature>
<feature type="binding site" evidence="1">
    <location>
        <position position="51"/>
    </location>
    <ligand>
        <name>Mg(2+)</name>
        <dbReference type="ChEBI" id="CHEBI:18420"/>
    </ligand>
</feature>
<feature type="binding site" evidence="1">
    <location>
        <position position="138"/>
    </location>
    <ligand>
        <name>deamido-NAD(+)</name>
        <dbReference type="ChEBI" id="CHEBI:58437"/>
    </ligand>
</feature>
<feature type="binding site" evidence="1">
    <location>
        <position position="158"/>
    </location>
    <ligand>
        <name>ATP</name>
        <dbReference type="ChEBI" id="CHEBI:30616"/>
    </ligand>
</feature>
<feature type="binding site" evidence="1">
    <location>
        <position position="163"/>
    </location>
    <ligand>
        <name>Mg(2+)</name>
        <dbReference type="ChEBI" id="CHEBI:18420"/>
    </ligand>
</feature>
<feature type="binding site" evidence="1">
    <location>
        <position position="171"/>
    </location>
    <ligand>
        <name>deamido-NAD(+)</name>
        <dbReference type="ChEBI" id="CHEBI:58437"/>
    </ligand>
</feature>
<feature type="binding site" evidence="1">
    <location>
        <position position="178"/>
    </location>
    <ligand>
        <name>deamido-NAD(+)</name>
        <dbReference type="ChEBI" id="CHEBI:58437"/>
    </ligand>
</feature>
<feature type="binding site" evidence="1">
    <location>
        <position position="187"/>
    </location>
    <ligand>
        <name>ATP</name>
        <dbReference type="ChEBI" id="CHEBI:30616"/>
    </ligand>
</feature>
<feature type="binding site" evidence="1">
    <location>
        <position position="209"/>
    </location>
    <ligand>
        <name>ATP</name>
        <dbReference type="ChEBI" id="CHEBI:30616"/>
    </ligand>
</feature>
<feature type="binding site" evidence="1">
    <location>
        <begin position="258"/>
        <end position="259"/>
    </location>
    <ligand>
        <name>deamido-NAD(+)</name>
        <dbReference type="ChEBI" id="CHEBI:58437"/>
    </ligand>
</feature>
<sequence length="272" mass="30101">MTLQEQIMKALHVQPVIDPKAEIRKRVDFLKDYVKKTGAKGFVLGISGGQDSTLAGRLAQLAVEEIRNEGGNATFIAVRLPYKVQKDEDDAQLALQFIQADQSVAFDIASTVDAFSNQYENLLDESLTDFNKGNVKARIRMVTQYAIGGQKGLLVIGTDHAAEAVTGFFTKFGDGGADLLPLTGLTKRQGRALLQELGADERLYLKMPTADLLDEKPGQADETELGITYDQLDDYLEGKTVPADVAEKIEKRYTVSEHKRQVPASMFDDWWK</sequence>
<accession>Q63CG2</accession>
<proteinExistence type="inferred from homology"/>
<name>NADE_BACCZ</name>
<organism>
    <name type="scientific">Bacillus cereus (strain ZK / E33L)</name>
    <dbReference type="NCBI Taxonomy" id="288681"/>
    <lineage>
        <taxon>Bacteria</taxon>
        <taxon>Bacillati</taxon>
        <taxon>Bacillota</taxon>
        <taxon>Bacilli</taxon>
        <taxon>Bacillales</taxon>
        <taxon>Bacillaceae</taxon>
        <taxon>Bacillus</taxon>
        <taxon>Bacillus cereus group</taxon>
    </lineage>
</organism>
<gene>
    <name evidence="1" type="primary">nadE</name>
    <name type="ordered locus">BCE33L1810</name>
</gene>
<reference key="1">
    <citation type="journal article" date="2006" name="J. Bacteriol.">
        <title>Pathogenomic sequence analysis of Bacillus cereus and Bacillus thuringiensis isolates closely related to Bacillus anthracis.</title>
        <authorList>
            <person name="Han C.S."/>
            <person name="Xie G."/>
            <person name="Challacombe J.F."/>
            <person name="Altherr M.R."/>
            <person name="Bhotika S.S."/>
            <person name="Bruce D."/>
            <person name="Campbell C.S."/>
            <person name="Campbell M.L."/>
            <person name="Chen J."/>
            <person name="Chertkov O."/>
            <person name="Cleland C."/>
            <person name="Dimitrijevic M."/>
            <person name="Doggett N.A."/>
            <person name="Fawcett J.J."/>
            <person name="Glavina T."/>
            <person name="Goodwin L.A."/>
            <person name="Hill K.K."/>
            <person name="Hitchcock P."/>
            <person name="Jackson P.J."/>
            <person name="Keim P."/>
            <person name="Kewalramani A.R."/>
            <person name="Longmire J."/>
            <person name="Lucas S."/>
            <person name="Malfatti S."/>
            <person name="McMurry K."/>
            <person name="Meincke L.J."/>
            <person name="Misra M."/>
            <person name="Moseman B.L."/>
            <person name="Mundt M."/>
            <person name="Munk A.C."/>
            <person name="Okinaka R.T."/>
            <person name="Parson-Quintana B."/>
            <person name="Reilly L.P."/>
            <person name="Richardson P."/>
            <person name="Robinson D.L."/>
            <person name="Rubin E."/>
            <person name="Saunders E."/>
            <person name="Tapia R."/>
            <person name="Tesmer J.G."/>
            <person name="Thayer N."/>
            <person name="Thompson L.S."/>
            <person name="Tice H."/>
            <person name="Ticknor L.O."/>
            <person name="Wills P.L."/>
            <person name="Brettin T.S."/>
            <person name="Gilna P."/>
        </authorList>
    </citation>
    <scope>NUCLEOTIDE SEQUENCE [LARGE SCALE GENOMIC DNA]</scope>
    <source>
        <strain>ZK / E33L</strain>
    </source>
</reference>
<keyword id="KW-0067">ATP-binding</keyword>
<keyword id="KW-0436">Ligase</keyword>
<keyword id="KW-0460">Magnesium</keyword>
<keyword id="KW-0479">Metal-binding</keyword>
<keyword id="KW-0520">NAD</keyword>
<keyword id="KW-0547">Nucleotide-binding</keyword>
<protein>
    <recommendedName>
        <fullName evidence="1">NH(3)-dependent NAD(+) synthetase</fullName>
        <ecNumber evidence="1">6.3.1.5</ecNumber>
    </recommendedName>
</protein>
<comment type="function">
    <text evidence="1">Catalyzes the ATP-dependent amidation of deamido-NAD to form NAD. Uses ammonia as a nitrogen source.</text>
</comment>
<comment type="catalytic activity">
    <reaction evidence="1">
        <text>deamido-NAD(+) + NH4(+) + ATP = AMP + diphosphate + NAD(+) + H(+)</text>
        <dbReference type="Rhea" id="RHEA:21188"/>
        <dbReference type="ChEBI" id="CHEBI:15378"/>
        <dbReference type="ChEBI" id="CHEBI:28938"/>
        <dbReference type="ChEBI" id="CHEBI:30616"/>
        <dbReference type="ChEBI" id="CHEBI:33019"/>
        <dbReference type="ChEBI" id="CHEBI:57540"/>
        <dbReference type="ChEBI" id="CHEBI:58437"/>
        <dbReference type="ChEBI" id="CHEBI:456215"/>
        <dbReference type="EC" id="6.3.1.5"/>
    </reaction>
</comment>
<comment type="pathway">
    <text evidence="1">Cofactor biosynthesis; NAD(+) biosynthesis; NAD(+) from deamido-NAD(+) (ammonia route): step 1/1.</text>
</comment>
<comment type="subunit">
    <text evidence="1">Homodimer.</text>
</comment>
<comment type="similarity">
    <text evidence="1">Belongs to the NAD synthetase family.</text>
</comment>